<reference key="1">
    <citation type="journal article" date="2010" name="J. Bacteriol.">
        <title>Genome sequence of the dioxin-mineralizing bacterium Sphingomonas wittichii RW1.</title>
        <authorList>
            <person name="Miller T.R."/>
            <person name="Delcher A.L."/>
            <person name="Salzberg S.L."/>
            <person name="Saunders E."/>
            <person name="Detter J.C."/>
            <person name="Halden R.U."/>
        </authorList>
    </citation>
    <scope>NUCLEOTIDE SEQUENCE [LARGE SCALE GENOMIC DNA]</scope>
    <source>
        <strain>DSM 6014 / CCUG 31198 / JCM 15750 / NBRC 105917 / EY 4224 / RW1</strain>
    </source>
</reference>
<accession>A5VBY5</accession>
<comment type="function">
    <text evidence="1">Channel that opens in response to stretch forces in the membrane lipid bilayer. May participate in the regulation of osmotic pressure changes within the cell.</text>
</comment>
<comment type="subunit">
    <text evidence="1">Homopentamer.</text>
</comment>
<comment type="subcellular location">
    <subcellularLocation>
        <location evidence="1">Cell inner membrane</location>
        <topology evidence="1">Multi-pass membrane protein</topology>
    </subcellularLocation>
</comment>
<comment type="similarity">
    <text evidence="1">Belongs to the MscL family.</text>
</comment>
<evidence type="ECO:0000255" key="1">
    <source>
        <dbReference type="HAMAP-Rule" id="MF_00115"/>
    </source>
</evidence>
<protein>
    <recommendedName>
        <fullName evidence="1">Large-conductance mechanosensitive channel</fullName>
    </recommendedName>
</protein>
<sequence length="142" mass="15304">MLQDFKAFINKGNVVDLAVAVIIGAAFGKIVSSLTDDLIMPLIGYFTGGLDFSSHFIRLGEIPANFTGSVTSYADLKNAGVPLIGFGQFITVAVNFLLIAFVVFLVVRAVQRFNKAEEAKPAEPAEDVVLLREILAELKKKG</sequence>
<name>MSCL_RHIWR</name>
<dbReference type="EMBL" id="CP000699">
    <property type="protein sequence ID" value="ABQ69801.1"/>
    <property type="molecule type" value="Genomic_DNA"/>
</dbReference>
<dbReference type="SMR" id="A5VBY5"/>
<dbReference type="STRING" id="392499.Swit_3455"/>
<dbReference type="PaxDb" id="392499-Swit_3455"/>
<dbReference type="KEGG" id="swi:Swit_3455"/>
<dbReference type="eggNOG" id="COG1970">
    <property type="taxonomic scope" value="Bacteria"/>
</dbReference>
<dbReference type="HOGENOM" id="CLU_095787_0_1_5"/>
<dbReference type="OrthoDB" id="9810350at2"/>
<dbReference type="Proteomes" id="UP000001989">
    <property type="component" value="Chromosome"/>
</dbReference>
<dbReference type="GO" id="GO:0005886">
    <property type="term" value="C:plasma membrane"/>
    <property type="evidence" value="ECO:0007669"/>
    <property type="project" value="UniProtKB-SubCell"/>
</dbReference>
<dbReference type="GO" id="GO:0008381">
    <property type="term" value="F:mechanosensitive monoatomic ion channel activity"/>
    <property type="evidence" value="ECO:0007669"/>
    <property type="project" value="UniProtKB-UniRule"/>
</dbReference>
<dbReference type="Gene3D" id="1.10.1200.120">
    <property type="entry name" value="Large-conductance mechanosensitive channel, MscL, domain 1"/>
    <property type="match status" value="1"/>
</dbReference>
<dbReference type="HAMAP" id="MF_00115">
    <property type="entry name" value="MscL"/>
    <property type="match status" value="1"/>
</dbReference>
<dbReference type="InterPro" id="IPR019823">
    <property type="entry name" value="Mechanosensitive_channel_CS"/>
</dbReference>
<dbReference type="InterPro" id="IPR001185">
    <property type="entry name" value="MS_channel"/>
</dbReference>
<dbReference type="InterPro" id="IPR037673">
    <property type="entry name" value="MSC/AndL"/>
</dbReference>
<dbReference type="InterPro" id="IPR036019">
    <property type="entry name" value="MscL_channel"/>
</dbReference>
<dbReference type="NCBIfam" id="TIGR00220">
    <property type="entry name" value="mscL"/>
    <property type="match status" value="1"/>
</dbReference>
<dbReference type="NCBIfam" id="NF010557">
    <property type="entry name" value="PRK13952.1"/>
    <property type="match status" value="1"/>
</dbReference>
<dbReference type="PANTHER" id="PTHR30266:SF2">
    <property type="entry name" value="LARGE-CONDUCTANCE MECHANOSENSITIVE CHANNEL"/>
    <property type="match status" value="1"/>
</dbReference>
<dbReference type="PANTHER" id="PTHR30266">
    <property type="entry name" value="MECHANOSENSITIVE CHANNEL MSCL"/>
    <property type="match status" value="1"/>
</dbReference>
<dbReference type="Pfam" id="PF01741">
    <property type="entry name" value="MscL"/>
    <property type="match status" value="1"/>
</dbReference>
<dbReference type="PRINTS" id="PR01264">
    <property type="entry name" value="MECHCHANNEL"/>
</dbReference>
<dbReference type="SUPFAM" id="SSF81330">
    <property type="entry name" value="Gated mechanosensitive channel"/>
    <property type="match status" value="1"/>
</dbReference>
<dbReference type="PROSITE" id="PS01327">
    <property type="entry name" value="MSCL"/>
    <property type="match status" value="1"/>
</dbReference>
<proteinExistence type="inferred from homology"/>
<keyword id="KW-0997">Cell inner membrane</keyword>
<keyword id="KW-1003">Cell membrane</keyword>
<keyword id="KW-0407">Ion channel</keyword>
<keyword id="KW-0406">Ion transport</keyword>
<keyword id="KW-0472">Membrane</keyword>
<keyword id="KW-1185">Reference proteome</keyword>
<keyword id="KW-0812">Transmembrane</keyword>
<keyword id="KW-1133">Transmembrane helix</keyword>
<keyword id="KW-0813">Transport</keyword>
<gene>
    <name evidence="1" type="primary">mscL</name>
    <name type="ordered locus">Swit_3455</name>
</gene>
<feature type="chain" id="PRO_1000015431" description="Large-conductance mechanosensitive channel">
    <location>
        <begin position="1"/>
        <end position="142"/>
    </location>
</feature>
<feature type="transmembrane region" description="Helical" evidence="1">
    <location>
        <begin position="14"/>
        <end position="34"/>
    </location>
</feature>
<feature type="transmembrane region" description="Helical" evidence="1">
    <location>
        <begin position="86"/>
        <end position="106"/>
    </location>
</feature>
<organism>
    <name type="scientific">Rhizorhabdus wittichii (strain DSM 6014 / CCUG 31198 / JCM 15750 / NBRC 105917 / EY 4224 / RW1)</name>
    <name type="common">Sphingomonas wittichii</name>
    <dbReference type="NCBI Taxonomy" id="392499"/>
    <lineage>
        <taxon>Bacteria</taxon>
        <taxon>Pseudomonadati</taxon>
        <taxon>Pseudomonadota</taxon>
        <taxon>Alphaproteobacteria</taxon>
        <taxon>Sphingomonadales</taxon>
        <taxon>Sphingomonadaceae</taxon>
        <taxon>Rhizorhabdus</taxon>
    </lineage>
</organism>